<evidence type="ECO:0000250" key="1">
    <source>
        <dbReference type="UniProtKB" id="P62505"/>
    </source>
</evidence>
<evidence type="ECO:0000250" key="2">
    <source>
        <dbReference type="UniProtKB" id="P69850"/>
    </source>
</evidence>
<evidence type="ECO:0000255" key="3"/>
<evidence type="ECO:0000256" key="4">
    <source>
        <dbReference type="SAM" id="MobiDB-lite"/>
    </source>
</evidence>
<evidence type="ECO:0000305" key="5"/>
<gene>
    <name type="primary">DAD3</name>
    <name type="ordered locus">CAALFM_CR06160CA</name>
    <name type="ORF">CaO19.11352</name>
    <name type="ORF">CaO19.3871</name>
</gene>
<protein>
    <recommendedName>
        <fullName>DASH complex subunit DAD3</fullName>
    </recommendedName>
    <alternativeName>
        <fullName>Outer kinetochore protein DAD3</fullName>
    </alternativeName>
</protein>
<keyword id="KW-0131">Cell cycle</keyword>
<keyword id="KW-0132">Cell division</keyword>
<keyword id="KW-0137">Centromere</keyword>
<keyword id="KW-0158">Chromosome</keyword>
<keyword id="KW-0159">Chromosome partition</keyword>
<keyword id="KW-0175">Coiled coil</keyword>
<keyword id="KW-0963">Cytoplasm</keyword>
<keyword id="KW-0206">Cytoskeleton</keyword>
<keyword id="KW-0995">Kinetochore</keyword>
<keyword id="KW-0493">Microtubule</keyword>
<keyword id="KW-0498">Mitosis</keyword>
<keyword id="KW-0539">Nucleus</keyword>
<keyword id="KW-1185">Reference proteome</keyword>
<organism>
    <name type="scientific">Candida albicans (strain SC5314 / ATCC MYA-2876)</name>
    <name type="common">Yeast</name>
    <dbReference type="NCBI Taxonomy" id="237561"/>
    <lineage>
        <taxon>Eukaryota</taxon>
        <taxon>Fungi</taxon>
        <taxon>Dikarya</taxon>
        <taxon>Ascomycota</taxon>
        <taxon>Saccharomycotina</taxon>
        <taxon>Pichiomycetes</taxon>
        <taxon>Debaryomycetaceae</taxon>
        <taxon>Candida/Lodderomyces clade</taxon>
        <taxon>Candida</taxon>
    </lineage>
</organism>
<proteinExistence type="inferred from homology"/>
<feature type="chain" id="PRO_0000175947" description="DASH complex subunit DAD3">
    <location>
        <begin position="1"/>
        <end position="138"/>
    </location>
</feature>
<feature type="region of interest" description="Disordered" evidence="4">
    <location>
        <begin position="1"/>
        <end position="20"/>
    </location>
</feature>
<feature type="region of interest" description="Disordered" evidence="4">
    <location>
        <begin position="106"/>
        <end position="138"/>
    </location>
</feature>
<feature type="coiled-coil region" evidence="3">
    <location>
        <begin position="30"/>
        <end position="59"/>
    </location>
</feature>
<feature type="compositionally biased region" description="Basic and acidic residues" evidence="4">
    <location>
        <begin position="1"/>
        <end position="11"/>
    </location>
</feature>
<feature type="compositionally biased region" description="Acidic residues" evidence="4">
    <location>
        <begin position="112"/>
        <end position="126"/>
    </location>
</feature>
<name>DAD3_CANAL</name>
<comment type="function">
    <text evidence="2">Component of the DASH complex that connects microtubules with kinetochores and couples microtubule depolymerisation to chromosome movement; it is involved in retrieving kinetochores to the spindle poles before their re-orientation on the spindle in early mitosis and allows microtubule depolymerization to pull chromosomes apart and resist detachment during anaphase. Kinetochores, consisting of a centromere-associated inner segment and a microtubule-contacting outer segment, play a crucial role in chromosome segregation by mediating the physical connection between centromeric DNA and microtubules. Kinetochores also serve as an input point for the spindle assembly checkpoint, which delays anaphase until all chromosomes have bioriented on the mitotic spindle.</text>
</comment>
<comment type="subunit">
    <text evidence="1 2">Component of the DASH complex consisting of ASK1, DAD1, DAD2, DAD3, DAD4, DAM1, DUO1, HSK3, SPC19 and SPC34, with a stoichiometry of one copy of each subunit per complex. Multiple DASH complexes oligomerize to form a ring that encircles spindle microtubules and organizes the rod-like NDC80 complexes of the outer kinetochore. DASH complex oligomerization strengthens microtubule attachments (By similarity). On cytoplasmic microtubules, DASH complexes appear to form patches instead of rings (By similarity).</text>
</comment>
<comment type="subcellular location">
    <subcellularLocation>
        <location evidence="2">Nucleus</location>
    </subcellularLocation>
    <subcellularLocation>
        <location evidence="2">Cytoplasm</location>
        <location evidence="2">Cytoskeleton</location>
        <location evidence="2">Spindle</location>
    </subcellularLocation>
    <subcellularLocation>
        <location evidence="2">Chromosome</location>
        <location evidence="2">Centromere</location>
        <location evidence="2">Kinetochore</location>
    </subcellularLocation>
</comment>
<comment type="similarity">
    <text evidence="5">Belongs to the DASH complex DAD3 family.</text>
</comment>
<reference key="1">
    <citation type="journal article" date="2004" name="Proc. Natl. Acad. Sci. U.S.A.">
        <title>The diploid genome sequence of Candida albicans.</title>
        <authorList>
            <person name="Jones T."/>
            <person name="Federspiel N.A."/>
            <person name="Chibana H."/>
            <person name="Dungan J."/>
            <person name="Kalman S."/>
            <person name="Magee B.B."/>
            <person name="Newport G."/>
            <person name="Thorstenson Y.R."/>
            <person name="Agabian N."/>
            <person name="Magee P.T."/>
            <person name="Davis R.W."/>
            <person name="Scherer S."/>
        </authorList>
    </citation>
    <scope>NUCLEOTIDE SEQUENCE [LARGE SCALE GENOMIC DNA]</scope>
    <source>
        <strain>SC5314 / ATCC MYA-2876</strain>
    </source>
</reference>
<reference key="2">
    <citation type="journal article" date="2007" name="Genome Biol.">
        <title>Assembly of the Candida albicans genome into sixteen supercontigs aligned on the eight chromosomes.</title>
        <authorList>
            <person name="van het Hoog M."/>
            <person name="Rast T.J."/>
            <person name="Martchenko M."/>
            <person name="Grindle S."/>
            <person name="Dignard D."/>
            <person name="Hogues H."/>
            <person name="Cuomo C."/>
            <person name="Berriman M."/>
            <person name="Scherer S."/>
            <person name="Magee B.B."/>
            <person name="Whiteway M."/>
            <person name="Chibana H."/>
            <person name="Nantel A."/>
            <person name="Magee P.T."/>
        </authorList>
    </citation>
    <scope>GENOME REANNOTATION</scope>
    <source>
        <strain>SC5314 / ATCC MYA-2876</strain>
    </source>
</reference>
<reference key="3">
    <citation type="journal article" date="2013" name="Genome Biol.">
        <title>Assembly of a phased diploid Candida albicans genome facilitates allele-specific measurements and provides a simple model for repeat and indel structure.</title>
        <authorList>
            <person name="Muzzey D."/>
            <person name="Schwartz K."/>
            <person name="Weissman J.S."/>
            <person name="Sherlock G."/>
        </authorList>
    </citation>
    <scope>NUCLEOTIDE SEQUENCE [LARGE SCALE GENOMIC DNA]</scope>
    <scope>GENOME REANNOTATION</scope>
    <source>
        <strain>SC5314 / ATCC MYA-2876</strain>
    </source>
</reference>
<accession>Q59VC6</accession>
<accession>A0A1D8PT75</accession>
<accession>Q59V81</accession>
<sequence>MSFTTKDKSDDSSIITTNYADNPNLSPIEQKILQQYQLMNNNLIKVSNELELLTNTTDEFGKGKGSSIHLVENLRQLETKLVFVYTFFKGAVYSILNAQDYIAEQETNGLEETNEEEDGNEEDESGNVELSGVSADEN</sequence>
<dbReference type="EMBL" id="CP017630">
    <property type="protein sequence ID" value="AOW31326.1"/>
    <property type="molecule type" value="Genomic_DNA"/>
</dbReference>
<dbReference type="RefSeq" id="XP_713496.1">
    <property type="nucleotide sequence ID" value="XM_708403.1"/>
</dbReference>
<dbReference type="SMR" id="Q59VC6"/>
<dbReference type="BioGRID" id="1227903">
    <property type="interactions" value="1"/>
</dbReference>
<dbReference type="STRING" id="237561.Q59VC6"/>
<dbReference type="EnsemblFungi" id="CR_06160C_A-T">
    <property type="protein sequence ID" value="CR_06160C_A-T-p1"/>
    <property type="gene ID" value="CR_06160C_A"/>
</dbReference>
<dbReference type="GeneID" id="3644864"/>
<dbReference type="KEGG" id="cal:CAALFM_CR06160CA"/>
<dbReference type="CGD" id="CAL0000201809">
    <property type="gene designation" value="DAD3"/>
</dbReference>
<dbReference type="VEuPathDB" id="FungiDB:CR_06160C_A"/>
<dbReference type="eggNOG" id="ENOG502S7SV">
    <property type="taxonomic scope" value="Eukaryota"/>
</dbReference>
<dbReference type="HOGENOM" id="CLU_153994_0_0_1"/>
<dbReference type="InParanoid" id="Q59VC6"/>
<dbReference type="OMA" id="TNYADNP"/>
<dbReference type="OrthoDB" id="2443965at2759"/>
<dbReference type="PRO" id="PR:Q59VC6"/>
<dbReference type="Proteomes" id="UP000000559">
    <property type="component" value="Chromosome R"/>
</dbReference>
<dbReference type="GO" id="GO:0005737">
    <property type="term" value="C:cytoplasm"/>
    <property type="evidence" value="ECO:0007669"/>
    <property type="project" value="UniProtKB-KW"/>
</dbReference>
<dbReference type="GO" id="GO:0042729">
    <property type="term" value="C:DASH complex"/>
    <property type="evidence" value="ECO:0000250"/>
    <property type="project" value="UniProtKB"/>
</dbReference>
<dbReference type="GO" id="GO:0005874">
    <property type="term" value="C:microtubule"/>
    <property type="evidence" value="ECO:0007669"/>
    <property type="project" value="UniProtKB-KW"/>
</dbReference>
<dbReference type="GO" id="GO:0072686">
    <property type="term" value="C:mitotic spindle"/>
    <property type="evidence" value="ECO:0007669"/>
    <property type="project" value="InterPro"/>
</dbReference>
<dbReference type="GO" id="GO:0008608">
    <property type="term" value="P:attachment of spindle microtubules to kinetochore"/>
    <property type="evidence" value="ECO:0000250"/>
    <property type="project" value="UniProtKB"/>
</dbReference>
<dbReference type="GO" id="GO:0051301">
    <property type="term" value="P:cell division"/>
    <property type="evidence" value="ECO:0007669"/>
    <property type="project" value="UniProtKB-KW"/>
</dbReference>
<dbReference type="GO" id="GO:0030447">
    <property type="term" value="P:filamentous growth"/>
    <property type="evidence" value="ECO:0000315"/>
    <property type="project" value="CGD"/>
</dbReference>
<dbReference type="GO" id="GO:1990758">
    <property type="term" value="P:mitotic sister chromatid biorientation"/>
    <property type="evidence" value="ECO:0000250"/>
    <property type="project" value="UniProtKB"/>
</dbReference>
<dbReference type="GO" id="GO:0007052">
    <property type="term" value="P:mitotic spindle organization"/>
    <property type="evidence" value="ECO:0000247"/>
    <property type="project" value="CGD"/>
</dbReference>
<dbReference type="GO" id="GO:1990976">
    <property type="term" value="P:protein transport along microtubule to mitotic spindle pole body"/>
    <property type="evidence" value="ECO:0000250"/>
    <property type="project" value="UniProtKB"/>
</dbReference>
<dbReference type="InterPro" id="IPR013965">
    <property type="entry name" value="DASH_Dad3"/>
</dbReference>
<dbReference type="PANTHER" id="PTHR28017">
    <property type="entry name" value="DASH COMPLEX SUBUNIT DAD3"/>
    <property type="match status" value="1"/>
</dbReference>
<dbReference type="PANTHER" id="PTHR28017:SF1">
    <property type="entry name" value="DASH COMPLEX SUBUNIT DAD3"/>
    <property type="match status" value="1"/>
</dbReference>
<dbReference type="Pfam" id="PF08656">
    <property type="entry name" value="DASH_Dad3"/>
    <property type="match status" value="1"/>
</dbReference>